<reference key="1">
    <citation type="journal article" date="1998" name="Mol. Gen. Genet.">
        <title>Cloning of an EF-P homologue from Bacteroides fragilis that increases B. fragilis glutamine synthetase activity in Escherichia coli.</title>
        <authorList>
            <person name="Abratt V.R."/>
            <person name="Mbewe M."/>
            <person name="Woods D.R."/>
        </authorList>
    </citation>
    <scope>NUCLEOTIDE SEQUENCE [GENOMIC DNA]</scope>
    <source>
        <strain>BF1</strain>
    </source>
</reference>
<reference key="2">
    <citation type="journal article" date="2004" name="Proc. Natl. Acad. Sci. U.S.A.">
        <title>Genomic analysis of Bacteroides fragilis reveals extensive DNA inversions regulating cell surface adaptation.</title>
        <authorList>
            <person name="Kuwahara T."/>
            <person name="Yamashita A."/>
            <person name="Hirakawa H."/>
            <person name="Nakayama H."/>
            <person name="Toh H."/>
            <person name="Okada N."/>
            <person name="Kuhara S."/>
            <person name="Hattori M."/>
            <person name="Hayashi T."/>
            <person name="Ohnishi Y."/>
        </authorList>
    </citation>
    <scope>NUCLEOTIDE SEQUENCE [LARGE SCALE GENOMIC DNA]</scope>
    <source>
        <strain>YCH46</strain>
    </source>
</reference>
<gene>
    <name type="primary">efp</name>
    <name type="ordered locus">BF0486</name>
</gene>
<comment type="function">
    <text evidence="1">Involved in peptide bond synthesis. Stimulates efficient translation and peptide-bond synthesis on native or reconstituted 70S ribosomes in vitro. Probably functions indirectly by altering the affinity of the ribosome for aminoacyl-tRNA, thus increasing their reactivity as acceptors for peptidyl transferase (By similarity).</text>
</comment>
<comment type="pathway">
    <text>Protein biosynthesis; polypeptide chain elongation.</text>
</comment>
<comment type="subcellular location">
    <subcellularLocation>
        <location evidence="1">Cytoplasm</location>
    </subcellularLocation>
</comment>
<comment type="similarity">
    <text evidence="2">Belongs to the elongation factor P family.</text>
</comment>
<protein>
    <recommendedName>
        <fullName>Elongation factor P</fullName>
        <shortName>EF-P</shortName>
    </recommendedName>
</protein>
<accession>P70889</accession>
<accession>Q64Z41</accession>
<name>EFP_BACFR</name>
<dbReference type="EMBL" id="U75509">
    <property type="protein sequence ID" value="AAC26328.1"/>
    <property type="molecule type" value="Genomic_DNA"/>
</dbReference>
<dbReference type="EMBL" id="AP006841">
    <property type="protein sequence ID" value="BAD47235.1"/>
    <property type="molecule type" value="Genomic_DNA"/>
</dbReference>
<dbReference type="RefSeq" id="WP_005784338.1">
    <property type="nucleotide sequence ID" value="NZ_UYXF01000019.1"/>
</dbReference>
<dbReference type="RefSeq" id="YP_097769.1">
    <property type="nucleotide sequence ID" value="NC_006347.1"/>
</dbReference>
<dbReference type="SMR" id="P70889"/>
<dbReference type="STRING" id="295405.BF0486"/>
<dbReference type="GeneID" id="60368727"/>
<dbReference type="KEGG" id="bfr:BF0486"/>
<dbReference type="PATRIC" id="fig|295405.11.peg.502"/>
<dbReference type="HOGENOM" id="CLU_074944_0_1_10"/>
<dbReference type="OrthoDB" id="9801844at2"/>
<dbReference type="UniPathway" id="UPA00345"/>
<dbReference type="Proteomes" id="UP000002197">
    <property type="component" value="Chromosome"/>
</dbReference>
<dbReference type="GO" id="GO:0005737">
    <property type="term" value="C:cytoplasm"/>
    <property type="evidence" value="ECO:0007669"/>
    <property type="project" value="UniProtKB-SubCell"/>
</dbReference>
<dbReference type="GO" id="GO:0003746">
    <property type="term" value="F:translation elongation factor activity"/>
    <property type="evidence" value="ECO:0007669"/>
    <property type="project" value="UniProtKB-UniRule"/>
</dbReference>
<dbReference type="GO" id="GO:0043043">
    <property type="term" value="P:peptide biosynthetic process"/>
    <property type="evidence" value="ECO:0007669"/>
    <property type="project" value="InterPro"/>
</dbReference>
<dbReference type="CDD" id="cd04470">
    <property type="entry name" value="S1_EF-P_repeat_1"/>
    <property type="match status" value="1"/>
</dbReference>
<dbReference type="CDD" id="cd05794">
    <property type="entry name" value="S1_EF-P_repeat_2"/>
    <property type="match status" value="1"/>
</dbReference>
<dbReference type="FunFam" id="2.30.30.30:FF:000003">
    <property type="entry name" value="Elongation factor P"/>
    <property type="match status" value="1"/>
</dbReference>
<dbReference type="FunFam" id="2.40.50.140:FF:000004">
    <property type="entry name" value="Elongation factor P"/>
    <property type="match status" value="1"/>
</dbReference>
<dbReference type="FunFam" id="2.40.50.140:FF:000009">
    <property type="entry name" value="Elongation factor P"/>
    <property type="match status" value="1"/>
</dbReference>
<dbReference type="Gene3D" id="2.30.30.30">
    <property type="match status" value="1"/>
</dbReference>
<dbReference type="Gene3D" id="2.40.50.140">
    <property type="entry name" value="Nucleic acid-binding proteins"/>
    <property type="match status" value="2"/>
</dbReference>
<dbReference type="HAMAP" id="MF_00141">
    <property type="entry name" value="EF_P"/>
    <property type="match status" value="1"/>
</dbReference>
<dbReference type="InterPro" id="IPR015365">
    <property type="entry name" value="Elong-fact-P_C"/>
</dbReference>
<dbReference type="InterPro" id="IPR012340">
    <property type="entry name" value="NA-bd_OB-fold"/>
</dbReference>
<dbReference type="InterPro" id="IPR014722">
    <property type="entry name" value="Rib_uL2_dom2"/>
</dbReference>
<dbReference type="InterPro" id="IPR020599">
    <property type="entry name" value="Transl_elong_fac_P/YeiP"/>
</dbReference>
<dbReference type="InterPro" id="IPR013185">
    <property type="entry name" value="Transl_elong_KOW-like"/>
</dbReference>
<dbReference type="InterPro" id="IPR001059">
    <property type="entry name" value="Transl_elong_P/YeiP_cen"/>
</dbReference>
<dbReference type="InterPro" id="IPR013852">
    <property type="entry name" value="Transl_elong_P/YeiP_CS"/>
</dbReference>
<dbReference type="InterPro" id="IPR011768">
    <property type="entry name" value="Transl_elongation_fac_P"/>
</dbReference>
<dbReference type="InterPro" id="IPR008991">
    <property type="entry name" value="Translation_prot_SH3-like_sf"/>
</dbReference>
<dbReference type="NCBIfam" id="TIGR00038">
    <property type="entry name" value="efp"/>
    <property type="match status" value="1"/>
</dbReference>
<dbReference type="NCBIfam" id="NF001810">
    <property type="entry name" value="PRK00529.1"/>
    <property type="match status" value="1"/>
</dbReference>
<dbReference type="PANTHER" id="PTHR30053">
    <property type="entry name" value="ELONGATION FACTOR P"/>
    <property type="match status" value="1"/>
</dbReference>
<dbReference type="PANTHER" id="PTHR30053:SF12">
    <property type="entry name" value="ELONGATION FACTOR P (EF-P) FAMILY PROTEIN"/>
    <property type="match status" value="1"/>
</dbReference>
<dbReference type="Pfam" id="PF01132">
    <property type="entry name" value="EFP"/>
    <property type="match status" value="1"/>
</dbReference>
<dbReference type="Pfam" id="PF08207">
    <property type="entry name" value="EFP_N"/>
    <property type="match status" value="1"/>
</dbReference>
<dbReference type="Pfam" id="PF09285">
    <property type="entry name" value="Elong-fact-P_C"/>
    <property type="match status" value="1"/>
</dbReference>
<dbReference type="PIRSF" id="PIRSF005901">
    <property type="entry name" value="EF-P"/>
    <property type="match status" value="1"/>
</dbReference>
<dbReference type="SMART" id="SM01185">
    <property type="entry name" value="EFP"/>
    <property type="match status" value="1"/>
</dbReference>
<dbReference type="SMART" id="SM00841">
    <property type="entry name" value="Elong-fact-P_C"/>
    <property type="match status" value="1"/>
</dbReference>
<dbReference type="SUPFAM" id="SSF50249">
    <property type="entry name" value="Nucleic acid-binding proteins"/>
    <property type="match status" value="2"/>
</dbReference>
<dbReference type="SUPFAM" id="SSF50104">
    <property type="entry name" value="Translation proteins SH3-like domain"/>
    <property type="match status" value="1"/>
</dbReference>
<dbReference type="PROSITE" id="PS01275">
    <property type="entry name" value="EFP"/>
    <property type="match status" value="1"/>
</dbReference>
<keyword id="KW-0963">Cytoplasm</keyword>
<keyword id="KW-0251">Elongation factor</keyword>
<keyword id="KW-0648">Protein biosynthesis</keyword>
<evidence type="ECO:0000250" key="1"/>
<evidence type="ECO:0000305" key="2"/>
<proteinExistence type="inferred from homology"/>
<organism>
    <name type="scientific">Bacteroides fragilis (strain YCH46)</name>
    <dbReference type="NCBI Taxonomy" id="295405"/>
    <lineage>
        <taxon>Bacteria</taxon>
        <taxon>Pseudomonadati</taxon>
        <taxon>Bacteroidota</taxon>
        <taxon>Bacteroidia</taxon>
        <taxon>Bacteroidales</taxon>
        <taxon>Bacteroidaceae</taxon>
        <taxon>Bacteroides</taxon>
    </lineage>
</organism>
<feature type="chain" id="PRO_0000094195" description="Elongation factor P">
    <location>
        <begin position="1"/>
        <end position="188"/>
    </location>
</feature>
<feature type="sequence conflict" description="In Ref. 1; AAC26328." evidence="2" ref="1">
    <location>
        <begin position="20"/>
        <end position="22"/>
    </location>
</feature>
<sequence>MINAQDIKNGTCIRMDGKLYFCIEFLHVKPGKGNTFMRTKLKDVVSGYVLERRFNIGEKLEDVRVERRPYQYLYKEGEDYIFMNQETFDQHPIAHDLINGVDFLLEGAVVEVVSDASTETVLYADMPIKVQMKVTYTEPGLKGDTATNTLKPATVESGATVRVPLFISEGETIEIDTRDGSYVGRVKA</sequence>